<dbReference type="EC" id="3.5.4.16" evidence="1"/>
<dbReference type="EMBL" id="CP001173">
    <property type="protein sequence ID" value="ACI27631.1"/>
    <property type="molecule type" value="Genomic_DNA"/>
</dbReference>
<dbReference type="RefSeq" id="WP_000426948.1">
    <property type="nucleotide sequence ID" value="NC_011333.1"/>
</dbReference>
<dbReference type="SMR" id="B5Z7T2"/>
<dbReference type="KEGG" id="hpg:HPG27_877"/>
<dbReference type="HOGENOM" id="CLU_049768_3_4_7"/>
<dbReference type="UniPathway" id="UPA00848">
    <property type="reaction ID" value="UER00151"/>
</dbReference>
<dbReference type="Proteomes" id="UP000001735">
    <property type="component" value="Chromosome"/>
</dbReference>
<dbReference type="GO" id="GO:0005737">
    <property type="term" value="C:cytoplasm"/>
    <property type="evidence" value="ECO:0007669"/>
    <property type="project" value="TreeGrafter"/>
</dbReference>
<dbReference type="GO" id="GO:0005525">
    <property type="term" value="F:GTP binding"/>
    <property type="evidence" value="ECO:0007669"/>
    <property type="project" value="UniProtKB-KW"/>
</dbReference>
<dbReference type="GO" id="GO:0003934">
    <property type="term" value="F:GTP cyclohydrolase I activity"/>
    <property type="evidence" value="ECO:0007669"/>
    <property type="project" value="UniProtKB-UniRule"/>
</dbReference>
<dbReference type="GO" id="GO:0008270">
    <property type="term" value="F:zinc ion binding"/>
    <property type="evidence" value="ECO:0007669"/>
    <property type="project" value="UniProtKB-UniRule"/>
</dbReference>
<dbReference type="GO" id="GO:0006730">
    <property type="term" value="P:one-carbon metabolic process"/>
    <property type="evidence" value="ECO:0007669"/>
    <property type="project" value="UniProtKB-UniRule"/>
</dbReference>
<dbReference type="GO" id="GO:0006729">
    <property type="term" value="P:tetrahydrobiopterin biosynthetic process"/>
    <property type="evidence" value="ECO:0007669"/>
    <property type="project" value="TreeGrafter"/>
</dbReference>
<dbReference type="GO" id="GO:0046654">
    <property type="term" value="P:tetrahydrofolate biosynthetic process"/>
    <property type="evidence" value="ECO:0007669"/>
    <property type="project" value="UniProtKB-UniRule"/>
</dbReference>
<dbReference type="FunFam" id="3.30.1130.10:FF:000001">
    <property type="entry name" value="GTP cyclohydrolase 1"/>
    <property type="match status" value="1"/>
</dbReference>
<dbReference type="Gene3D" id="1.10.286.10">
    <property type="match status" value="1"/>
</dbReference>
<dbReference type="Gene3D" id="3.30.1130.10">
    <property type="match status" value="1"/>
</dbReference>
<dbReference type="HAMAP" id="MF_00223">
    <property type="entry name" value="FolE"/>
    <property type="match status" value="1"/>
</dbReference>
<dbReference type="InterPro" id="IPR043133">
    <property type="entry name" value="GTP-CH-I_C/QueF"/>
</dbReference>
<dbReference type="InterPro" id="IPR043134">
    <property type="entry name" value="GTP-CH-I_N"/>
</dbReference>
<dbReference type="InterPro" id="IPR001474">
    <property type="entry name" value="GTP_CycHdrlase_I"/>
</dbReference>
<dbReference type="InterPro" id="IPR018234">
    <property type="entry name" value="GTP_CycHdrlase_I_CS"/>
</dbReference>
<dbReference type="InterPro" id="IPR020602">
    <property type="entry name" value="GTP_CycHdrlase_I_dom"/>
</dbReference>
<dbReference type="NCBIfam" id="TIGR00063">
    <property type="entry name" value="folE"/>
    <property type="match status" value="1"/>
</dbReference>
<dbReference type="NCBIfam" id="NF006825">
    <property type="entry name" value="PRK09347.1-2"/>
    <property type="match status" value="1"/>
</dbReference>
<dbReference type="NCBIfam" id="NF006826">
    <property type="entry name" value="PRK09347.1-3"/>
    <property type="match status" value="1"/>
</dbReference>
<dbReference type="PANTHER" id="PTHR11109:SF7">
    <property type="entry name" value="GTP CYCLOHYDROLASE 1"/>
    <property type="match status" value="1"/>
</dbReference>
<dbReference type="PANTHER" id="PTHR11109">
    <property type="entry name" value="GTP CYCLOHYDROLASE I"/>
    <property type="match status" value="1"/>
</dbReference>
<dbReference type="Pfam" id="PF01227">
    <property type="entry name" value="GTP_cyclohydroI"/>
    <property type="match status" value="1"/>
</dbReference>
<dbReference type="SUPFAM" id="SSF55620">
    <property type="entry name" value="Tetrahydrobiopterin biosynthesis enzymes-like"/>
    <property type="match status" value="1"/>
</dbReference>
<dbReference type="PROSITE" id="PS00859">
    <property type="entry name" value="GTP_CYCLOHYDROL_1_1"/>
    <property type="match status" value="1"/>
</dbReference>
<dbReference type="PROSITE" id="PS00860">
    <property type="entry name" value="GTP_CYCLOHYDROL_1_2"/>
    <property type="match status" value="1"/>
</dbReference>
<sequence>MENFFNQFFENIGEDKNREGLKETPKRVQELWKFLYKGYKEDPKVALKSAYFQGVCDEMIVAQNIEFYSTCEHHLLPFFGNISVGYIPKEKIVGISAIAKLIEIYSKRLQIQERLTTQIAETFDEIIEPRGVIVVCEAKHLCMSMQGVQKQNAIIKTSVLRGLFKKDPKTRAEFMQLLKS</sequence>
<keyword id="KW-0342">GTP-binding</keyword>
<keyword id="KW-0378">Hydrolase</keyword>
<keyword id="KW-0479">Metal-binding</keyword>
<keyword id="KW-0547">Nucleotide-binding</keyword>
<keyword id="KW-0554">One-carbon metabolism</keyword>
<keyword id="KW-1185">Reference proteome</keyword>
<keyword id="KW-0862">Zinc</keyword>
<feature type="chain" id="PRO_1000100176" description="GTP cyclohydrolase 1">
    <location>
        <begin position="1"/>
        <end position="180"/>
    </location>
</feature>
<feature type="binding site" evidence="1">
    <location>
        <position position="71"/>
    </location>
    <ligand>
        <name>Zn(2+)</name>
        <dbReference type="ChEBI" id="CHEBI:29105"/>
    </ligand>
</feature>
<feature type="binding site" evidence="1">
    <location>
        <position position="74"/>
    </location>
    <ligand>
        <name>Zn(2+)</name>
        <dbReference type="ChEBI" id="CHEBI:29105"/>
    </ligand>
</feature>
<feature type="binding site" evidence="1">
    <location>
        <position position="142"/>
    </location>
    <ligand>
        <name>Zn(2+)</name>
        <dbReference type="ChEBI" id="CHEBI:29105"/>
    </ligand>
</feature>
<name>GCH1_HELPG</name>
<reference key="1">
    <citation type="journal article" date="2009" name="J. Bacteriol.">
        <title>The complete genome sequence of Helicobacter pylori strain G27.</title>
        <authorList>
            <person name="Baltrus D.A."/>
            <person name="Amieva M.R."/>
            <person name="Covacci A."/>
            <person name="Lowe T.M."/>
            <person name="Merrell D.S."/>
            <person name="Ottemann K.M."/>
            <person name="Stein M."/>
            <person name="Salama N.R."/>
            <person name="Guillemin K."/>
        </authorList>
    </citation>
    <scope>NUCLEOTIDE SEQUENCE [LARGE SCALE GENOMIC DNA]</scope>
    <source>
        <strain>G27</strain>
    </source>
</reference>
<comment type="catalytic activity">
    <reaction evidence="1">
        <text>GTP + H2O = 7,8-dihydroneopterin 3'-triphosphate + formate + H(+)</text>
        <dbReference type="Rhea" id="RHEA:17473"/>
        <dbReference type="ChEBI" id="CHEBI:15377"/>
        <dbReference type="ChEBI" id="CHEBI:15378"/>
        <dbReference type="ChEBI" id="CHEBI:15740"/>
        <dbReference type="ChEBI" id="CHEBI:37565"/>
        <dbReference type="ChEBI" id="CHEBI:58462"/>
        <dbReference type="EC" id="3.5.4.16"/>
    </reaction>
</comment>
<comment type="pathway">
    <text evidence="1">Cofactor biosynthesis; 7,8-dihydroneopterin triphosphate biosynthesis; 7,8-dihydroneopterin triphosphate from GTP: step 1/1.</text>
</comment>
<comment type="subunit">
    <text evidence="1">Homomer.</text>
</comment>
<comment type="similarity">
    <text evidence="1">Belongs to the GTP cyclohydrolase I family.</text>
</comment>
<accession>B5Z7T2</accession>
<proteinExistence type="inferred from homology"/>
<protein>
    <recommendedName>
        <fullName evidence="1">GTP cyclohydrolase 1</fullName>
        <ecNumber evidence="1">3.5.4.16</ecNumber>
    </recommendedName>
    <alternativeName>
        <fullName evidence="1">GTP cyclohydrolase I</fullName>
        <shortName evidence="1">GTP-CH-I</shortName>
    </alternativeName>
</protein>
<evidence type="ECO:0000255" key="1">
    <source>
        <dbReference type="HAMAP-Rule" id="MF_00223"/>
    </source>
</evidence>
<gene>
    <name evidence="1" type="primary">folE</name>
    <name type="ordered locus">HPG27_877</name>
</gene>
<organism>
    <name type="scientific">Helicobacter pylori (strain G27)</name>
    <dbReference type="NCBI Taxonomy" id="563041"/>
    <lineage>
        <taxon>Bacteria</taxon>
        <taxon>Pseudomonadati</taxon>
        <taxon>Campylobacterota</taxon>
        <taxon>Epsilonproteobacteria</taxon>
        <taxon>Campylobacterales</taxon>
        <taxon>Helicobacteraceae</taxon>
        <taxon>Helicobacter</taxon>
    </lineage>
</organism>